<name>TM242_MOUSE</name>
<accession>Q8VCR3</accession>
<accession>Q8C2T2</accession>
<accession>Q8CEX9</accession>
<accession>Q9CYJ2</accession>
<accession>Q9D1H4</accession>
<gene>
    <name evidence="6" type="primary">Tmem242</name>
</gene>
<proteinExistence type="evidence at transcript level"/>
<organism>
    <name type="scientific">Mus musculus</name>
    <name type="common">Mouse</name>
    <dbReference type="NCBI Taxonomy" id="10090"/>
    <lineage>
        <taxon>Eukaryota</taxon>
        <taxon>Metazoa</taxon>
        <taxon>Chordata</taxon>
        <taxon>Craniata</taxon>
        <taxon>Vertebrata</taxon>
        <taxon>Euteleostomi</taxon>
        <taxon>Mammalia</taxon>
        <taxon>Eutheria</taxon>
        <taxon>Euarchontoglires</taxon>
        <taxon>Glires</taxon>
        <taxon>Rodentia</taxon>
        <taxon>Myomorpha</taxon>
        <taxon>Muroidea</taxon>
        <taxon>Muridae</taxon>
        <taxon>Murinae</taxon>
        <taxon>Mus</taxon>
        <taxon>Mus</taxon>
    </lineage>
</organism>
<keyword id="KW-0007">Acetylation</keyword>
<keyword id="KW-0025">Alternative splicing</keyword>
<keyword id="KW-0472">Membrane</keyword>
<keyword id="KW-0496">Mitochondrion</keyword>
<keyword id="KW-0999">Mitochondrion inner membrane</keyword>
<keyword id="KW-1185">Reference proteome</keyword>
<keyword id="KW-0812">Transmembrane</keyword>
<keyword id="KW-1133">Transmembrane helix</keyword>
<dbReference type="EMBL" id="AK003559">
    <property type="protein sequence ID" value="BAB22856.1"/>
    <property type="molecule type" value="mRNA"/>
</dbReference>
<dbReference type="EMBL" id="AK009851">
    <property type="protein sequence ID" value="BAC25272.1"/>
    <property type="status" value="ALT_FRAME"/>
    <property type="molecule type" value="mRNA"/>
</dbReference>
<dbReference type="EMBL" id="AK017626">
    <property type="protein sequence ID" value="BAB30845.1"/>
    <property type="molecule type" value="mRNA"/>
</dbReference>
<dbReference type="EMBL" id="AK088025">
    <property type="protein sequence ID" value="BAC40103.1"/>
    <property type="molecule type" value="mRNA"/>
</dbReference>
<dbReference type="EMBL" id="AK155326">
    <property type="protein sequence ID" value="BAE33193.1"/>
    <property type="molecule type" value="mRNA"/>
</dbReference>
<dbReference type="EMBL" id="AK158107">
    <property type="protein sequence ID" value="BAE34359.1"/>
    <property type="molecule type" value="mRNA"/>
</dbReference>
<dbReference type="EMBL" id="BC019420">
    <property type="protein sequence ID" value="AAH19420.1"/>
    <property type="molecule type" value="mRNA"/>
</dbReference>
<dbReference type="CCDS" id="CCDS49930.1">
    <molecule id="Q8VCR3-1"/>
</dbReference>
<dbReference type="RefSeq" id="NP_081733.3">
    <molecule id="Q8VCR3-1"/>
    <property type="nucleotide sequence ID" value="NM_027457.4"/>
</dbReference>
<dbReference type="SMR" id="Q8VCR3"/>
<dbReference type="FunCoup" id="Q8VCR3">
    <property type="interactions" value="755"/>
</dbReference>
<dbReference type="STRING" id="10090.ENSMUSP00000005053"/>
<dbReference type="PhosphoSitePlus" id="Q8VCR3"/>
<dbReference type="PaxDb" id="10090-ENSMUSP00000005053"/>
<dbReference type="PeptideAtlas" id="Q8VCR3"/>
<dbReference type="ProteomicsDB" id="259414">
    <molecule id="Q8VCR3-1"/>
</dbReference>
<dbReference type="ProteomicsDB" id="259415">
    <molecule id="Q8VCR3-2"/>
</dbReference>
<dbReference type="ProteomicsDB" id="259416">
    <molecule id="Q8VCR3-3"/>
</dbReference>
<dbReference type="Pumba" id="Q8VCR3"/>
<dbReference type="Antibodypedia" id="49845">
    <property type="antibodies" value="39 antibodies from 8 providers"/>
</dbReference>
<dbReference type="DNASU" id="70544"/>
<dbReference type="Ensembl" id="ENSMUST00000005053.14">
    <molecule id="Q8VCR3-1"/>
    <property type="protein sequence ID" value="ENSMUSP00000005053.8"/>
    <property type="gene ID" value="ENSMUSG00000004945.16"/>
</dbReference>
<dbReference type="Ensembl" id="ENSMUST00000185896.2">
    <molecule id="Q8VCR3-2"/>
    <property type="protein sequence ID" value="ENSMUSP00000139712.2"/>
    <property type="gene ID" value="ENSMUSG00000004945.16"/>
</dbReference>
<dbReference type="Ensembl" id="ENSMUST00000188282.7">
    <molecule id="Q8VCR3-3"/>
    <property type="protein sequence ID" value="ENSMUSP00000139629.2"/>
    <property type="gene ID" value="ENSMUSG00000004945.16"/>
</dbReference>
<dbReference type="GeneID" id="70544"/>
<dbReference type="KEGG" id="mmu:70544"/>
<dbReference type="UCSC" id="uc008afa.1">
    <molecule id="Q8VCR3-1"/>
    <property type="organism name" value="mouse"/>
</dbReference>
<dbReference type="UCSC" id="uc008afc.1">
    <molecule id="Q8VCR3-3"/>
    <property type="organism name" value="mouse"/>
</dbReference>
<dbReference type="UCSC" id="uc008afd.1">
    <molecule id="Q8VCR3-2"/>
    <property type="organism name" value="mouse"/>
</dbReference>
<dbReference type="AGR" id="MGI:1917794"/>
<dbReference type="CTD" id="729515"/>
<dbReference type="MGI" id="MGI:1917794">
    <property type="gene designation" value="Tmem242"/>
</dbReference>
<dbReference type="VEuPathDB" id="HostDB:ENSMUSG00000004945"/>
<dbReference type="eggNOG" id="ENOG502S2GB">
    <property type="taxonomic scope" value="Eukaryota"/>
</dbReference>
<dbReference type="GeneTree" id="ENSGT00390000008642"/>
<dbReference type="HOGENOM" id="CLU_115460_0_0_1"/>
<dbReference type="InParanoid" id="Q8VCR3"/>
<dbReference type="OMA" id="RSPEWFN"/>
<dbReference type="OrthoDB" id="2378895at2759"/>
<dbReference type="PhylomeDB" id="Q8VCR3"/>
<dbReference type="TreeFam" id="TF323317"/>
<dbReference type="BioGRID-ORCS" id="70544">
    <property type="hits" value="10 hits in 79 CRISPR screens"/>
</dbReference>
<dbReference type="ChiTaRS" id="Tmem242">
    <property type="organism name" value="mouse"/>
</dbReference>
<dbReference type="PRO" id="PR:Q8VCR3"/>
<dbReference type="Proteomes" id="UP000000589">
    <property type="component" value="Chromosome 17"/>
</dbReference>
<dbReference type="RNAct" id="Q8VCR3">
    <property type="molecule type" value="protein"/>
</dbReference>
<dbReference type="Bgee" id="ENSMUSG00000004945">
    <property type="expression patterns" value="Expressed in hindlimb stylopod muscle and 249 other cell types or tissues"/>
</dbReference>
<dbReference type="GO" id="GO:0005743">
    <property type="term" value="C:mitochondrial inner membrane"/>
    <property type="evidence" value="ECO:0007669"/>
    <property type="project" value="UniProtKB-SubCell"/>
</dbReference>
<dbReference type="GO" id="GO:0033615">
    <property type="term" value="P:mitochondrial proton-transporting ATP synthase complex assembly"/>
    <property type="evidence" value="ECO:0007669"/>
    <property type="project" value="Ensembl"/>
</dbReference>
<dbReference type="InterPro" id="IPR009792">
    <property type="entry name" value="TMEM242"/>
</dbReference>
<dbReference type="PANTHER" id="PTHR13141">
    <property type="entry name" value="TRANSMEMBRANE PROTEIN 242"/>
    <property type="match status" value="1"/>
</dbReference>
<dbReference type="PANTHER" id="PTHR13141:SF4">
    <property type="entry name" value="TRANSMEMBRANE PROTEIN 242"/>
    <property type="match status" value="1"/>
</dbReference>
<dbReference type="Pfam" id="PF07096">
    <property type="entry name" value="DUF1358"/>
    <property type="match status" value="1"/>
</dbReference>
<feature type="chain" id="PRO_0000295849" description="Transmembrane protein 242">
    <location>
        <begin position="1"/>
        <end position="140"/>
    </location>
</feature>
<feature type="topological domain" description="Mitochondrial matrix" evidence="1">
    <location>
        <begin position="1"/>
        <end position="28"/>
    </location>
</feature>
<feature type="transmembrane region" description="Helical" evidence="2">
    <location>
        <begin position="29"/>
        <end position="49"/>
    </location>
</feature>
<feature type="topological domain" description="Mitochondrial intermembrane" evidence="1">
    <location>
        <begin position="50"/>
        <end position="80"/>
    </location>
</feature>
<feature type="transmembrane region" description="Helical" evidence="2">
    <location>
        <begin position="81"/>
        <end position="101"/>
    </location>
</feature>
<feature type="topological domain" description="Mitochondrial matrix" evidence="1">
    <location>
        <begin position="102"/>
        <end position="140"/>
    </location>
</feature>
<feature type="region of interest" description="Disordered" evidence="3">
    <location>
        <begin position="1"/>
        <end position="20"/>
    </location>
</feature>
<feature type="modified residue" description="N-acetylmethionine" evidence="1">
    <location>
        <position position="1"/>
    </location>
</feature>
<feature type="splice variant" id="VSP_027110" description="In isoform 2." evidence="4">
    <original>MKDFRSKMQSIFPPIPKNHESAEEWEEVLKWK</original>
    <variation>VSTSPCESCLSTLCCLKFLVFKFAYILVPVF</variation>
    <location>
        <begin position="109"/>
        <end position="140"/>
    </location>
</feature>
<feature type="splice variant" id="VSP_027111" description="In isoform 3." evidence="4">
    <original>MKDFRSKMQS</original>
    <variation>ALFDCREETR</variation>
    <location>
        <begin position="109"/>
        <end position="118"/>
    </location>
</feature>
<feature type="splice variant" id="VSP_027112" description="In isoform 3." evidence="4">
    <location>
        <begin position="119"/>
        <end position="140"/>
    </location>
</feature>
<feature type="sequence conflict" description="In Ref. 1; BAC40103/BAE33193." evidence="5" ref="1">
    <original>G</original>
    <variation>R</variation>
    <location>
        <position position="18"/>
    </location>
</feature>
<feature type="sequence conflict" description="In Ref. 1; BAC40103/BAE33193." evidence="5" ref="1">
    <original>H</original>
    <variation>R</variation>
    <location>
        <position position="127"/>
    </location>
</feature>
<sequence>METSGPGPGESSELEAPGSPDDRLFLVKGGIFLGSAAAAGMLAGFVTTLSLAKKKSPEWFNKGTMATAALPESGSSLALRALGWGSLYAWCGVGVISFAVWKALGVHSMKDFRSKMQSIFPPIPKNHESAEEWEEVLKWK</sequence>
<reference key="1">
    <citation type="journal article" date="2005" name="Science">
        <title>The transcriptional landscape of the mammalian genome.</title>
        <authorList>
            <person name="Carninci P."/>
            <person name="Kasukawa T."/>
            <person name="Katayama S."/>
            <person name="Gough J."/>
            <person name="Frith M.C."/>
            <person name="Maeda N."/>
            <person name="Oyama R."/>
            <person name="Ravasi T."/>
            <person name="Lenhard B."/>
            <person name="Wells C."/>
            <person name="Kodzius R."/>
            <person name="Shimokawa K."/>
            <person name="Bajic V.B."/>
            <person name="Brenner S.E."/>
            <person name="Batalov S."/>
            <person name="Forrest A.R."/>
            <person name="Zavolan M."/>
            <person name="Davis M.J."/>
            <person name="Wilming L.G."/>
            <person name="Aidinis V."/>
            <person name="Allen J.E."/>
            <person name="Ambesi-Impiombato A."/>
            <person name="Apweiler R."/>
            <person name="Aturaliya R.N."/>
            <person name="Bailey T.L."/>
            <person name="Bansal M."/>
            <person name="Baxter L."/>
            <person name="Beisel K.W."/>
            <person name="Bersano T."/>
            <person name="Bono H."/>
            <person name="Chalk A.M."/>
            <person name="Chiu K.P."/>
            <person name="Choudhary V."/>
            <person name="Christoffels A."/>
            <person name="Clutterbuck D.R."/>
            <person name="Crowe M.L."/>
            <person name="Dalla E."/>
            <person name="Dalrymple B.P."/>
            <person name="de Bono B."/>
            <person name="Della Gatta G."/>
            <person name="di Bernardo D."/>
            <person name="Down T."/>
            <person name="Engstrom P."/>
            <person name="Fagiolini M."/>
            <person name="Faulkner G."/>
            <person name="Fletcher C.F."/>
            <person name="Fukushima T."/>
            <person name="Furuno M."/>
            <person name="Futaki S."/>
            <person name="Gariboldi M."/>
            <person name="Georgii-Hemming P."/>
            <person name="Gingeras T.R."/>
            <person name="Gojobori T."/>
            <person name="Green R.E."/>
            <person name="Gustincich S."/>
            <person name="Harbers M."/>
            <person name="Hayashi Y."/>
            <person name="Hensch T.K."/>
            <person name="Hirokawa N."/>
            <person name="Hill D."/>
            <person name="Huminiecki L."/>
            <person name="Iacono M."/>
            <person name="Ikeo K."/>
            <person name="Iwama A."/>
            <person name="Ishikawa T."/>
            <person name="Jakt M."/>
            <person name="Kanapin A."/>
            <person name="Katoh M."/>
            <person name="Kawasawa Y."/>
            <person name="Kelso J."/>
            <person name="Kitamura H."/>
            <person name="Kitano H."/>
            <person name="Kollias G."/>
            <person name="Krishnan S.P."/>
            <person name="Kruger A."/>
            <person name="Kummerfeld S.K."/>
            <person name="Kurochkin I.V."/>
            <person name="Lareau L.F."/>
            <person name="Lazarevic D."/>
            <person name="Lipovich L."/>
            <person name="Liu J."/>
            <person name="Liuni S."/>
            <person name="McWilliam S."/>
            <person name="Madan Babu M."/>
            <person name="Madera M."/>
            <person name="Marchionni L."/>
            <person name="Matsuda H."/>
            <person name="Matsuzawa S."/>
            <person name="Miki H."/>
            <person name="Mignone F."/>
            <person name="Miyake S."/>
            <person name="Morris K."/>
            <person name="Mottagui-Tabar S."/>
            <person name="Mulder N."/>
            <person name="Nakano N."/>
            <person name="Nakauchi H."/>
            <person name="Ng P."/>
            <person name="Nilsson R."/>
            <person name="Nishiguchi S."/>
            <person name="Nishikawa S."/>
            <person name="Nori F."/>
            <person name="Ohara O."/>
            <person name="Okazaki Y."/>
            <person name="Orlando V."/>
            <person name="Pang K.C."/>
            <person name="Pavan W.J."/>
            <person name="Pavesi G."/>
            <person name="Pesole G."/>
            <person name="Petrovsky N."/>
            <person name="Piazza S."/>
            <person name="Reed J."/>
            <person name="Reid J.F."/>
            <person name="Ring B.Z."/>
            <person name="Ringwald M."/>
            <person name="Rost B."/>
            <person name="Ruan Y."/>
            <person name="Salzberg S.L."/>
            <person name="Sandelin A."/>
            <person name="Schneider C."/>
            <person name="Schoenbach C."/>
            <person name="Sekiguchi K."/>
            <person name="Semple C.A."/>
            <person name="Seno S."/>
            <person name="Sessa L."/>
            <person name="Sheng Y."/>
            <person name="Shibata Y."/>
            <person name="Shimada H."/>
            <person name="Shimada K."/>
            <person name="Silva D."/>
            <person name="Sinclair B."/>
            <person name="Sperling S."/>
            <person name="Stupka E."/>
            <person name="Sugiura K."/>
            <person name="Sultana R."/>
            <person name="Takenaka Y."/>
            <person name="Taki K."/>
            <person name="Tammoja K."/>
            <person name="Tan S.L."/>
            <person name="Tang S."/>
            <person name="Taylor M.S."/>
            <person name="Tegner J."/>
            <person name="Teichmann S.A."/>
            <person name="Ueda H.R."/>
            <person name="van Nimwegen E."/>
            <person name="Verardo R."/>
            <person name="Wei C.L."/>
            <person name="Yagi K."/>
            <person name="Yamanishi H."/>
            <person name="Zabarovsky E."/>
            <person name="Zhu S."/>
            <person name="Zimmer A."/>
            <person name="Hide W."/>
            <person name="Bult C."/>
            <person name="Grimmond S.M."/>
            <person name="Teasdale R.D."/>
            <person name="Liu E.T."/>
            <person name="Brusic V."/>
            <person name="Quackenbush J."/>
            <person name="Wahlestedt C."/>
            <person name="Mattick J.S."/>
            <person name="Hume D.A."/>
            <person name="Kai C."/>
            <person name="Sasaki D."/>
            <person name="Tomaru Y."/>
            <person name="Fukuda S."/>
            <person name="Kanamori-Katayama M."/>
            <person name="Suzuki M."/>
            <person name="Aoki J."/>
            <person name="Arakawa T."/>
            <person name="Iida J."/>
            <person name="Imamura K."/>
            <person name="Itoh M."/>
            <person name="Kato T."/>
            <person name="Kawaji H."/>
            <person name="Kawagashira N."/>
            <person name="Kawashima T."/>
            <person name="Kojima M."/>
            <person name="Kondo S."/>
            <person name="Konno H."/>
            <person name="Nakano K."/>
            <person name="Ninomiya N."/>
            <person name="Nishio T."/>
            <person name="Okada M."/>
            <person name="Plessy C."/>
            <person name="Shibata K."/>
            <person name="Shiraki T."/>
            <person name="Suzuki S."/>
            <person name="Tagami M."/>
            <person name="Waki K."/>
            <person name="Watahiki A."/>
            <person name="Okamura-Oho Y."/>
            <person name="Suzuki H."/>
            <person name="Kawai J."/>
            <person name="Hayashizaki Y."/>
        </authorList>
    </citation>
    <scope>NUCLEOTIDE SEQUENCE [LARGE SCALE MRNA] (ISOFORMS 1; 2 AND 3)</scope>
    <source>
        <strain>C57BL/6J</strain>
        <strain>NOD</strain>
        <tissue>Embryo</tissue>
        <tissue>Inner ear</tissue>
        <tissue>Thymus</tissue>
        <tissue>Tongue</tissue>
    </source>
</reference>
<reference key="2">
    <citation type="journal article" date="2004" name="Genome Res.">
        <title>The status, quality, and expansion of the NIH full-length cDNA project: the Mammalian Gene Collection (MGC).</title>
        <authorList>
            <consortium name="The MGC Project Team"/>
        </authorList>
    </citation>
    <scope>NUCLEOTIDE SEQUENCE [LARGE SCALE MRNA] (ISOFORM 1)</scope>
    <source>
        <strain>FVB/N</strain>
        <tissue>Liver</tissue>
    </source>
</reference>
<comment type="function">
    <text evidence="1">Scaffold protein that participates in the c-ring assembly of mitochondrial ATP synthase (F(1)F(0) ATP synthase or complex V) by facilitating the membrane insertion and oligomer formation of the subunit c/ATP5MC3. Participates in the incorporation of the c-ring into vestigial complexes. Additionally influences the incorporation of subunits MT-ATP6, MT-ATP8, ATP5MJ, and ATP5MK in the ATP synthase.</text>
</comment>
<comment type="subunit">
    <text evidence="1">Interacts with the core subunits NDUFAF1, ECSIT and ACAD9 of the MCIA complex. Interacts with ATP5MC3, NDUFC2, TMEM70, MT-ND2 AND MT-ND3.</text>
</comment>
<comment type="subcellular location">
    <subcellularLocation>
        <location evidence="1">Mitochondrion inner membrane</location>
        <topology evidence="1">Multi-pass membrane protein</topology>
    </subcellularLocation>
</comment>
<comment type="alternative products">
    <event type="alternative splicing"/>
    <isoform>
        <id>Q8VCR3-1</id>
        <name>1</name>
        <sequence type="displayed"/>
    </isoform>
    <isoform>
        <id>Q8VCR3-2</id>
        <name>2</name>
        <sequence type="described" ref="VSP_027110"/>
    </isoform>
    <isoform>
        <id>Q8VCR3-3</id>
        <name>3</name>
        <sequence type="described" ref="VSP_027111 VSP_027112"/>
    </isoform>
</comment>
<comment type="similarity">
    <text evidence="5">Belongs to the TMEM242 family.</text>
</comment>
<comment type="sequence caution" evidence="5">
    <conflict type="frameshift">
        <sequence resource="EMBL-CDS" id="BAC25272"/>
    </conflict>
</comment>
<protein>
    <recommendedName>
        <fullName evidence="5">Transmembrane protein 242</fullName>
    </recommendedName>
</protein>
<evidence type="ECO:0000250" key="1">
    <source>
        <dbReference type="UniProtKB" id="Q9NWH2"/>
    </source>
</evidence>
<evidence type="ECO:0000255" key="2"/>
<evidence type="ECO:0000256" key="3">
    <source>
        <dbReference type="SAM" id="MobiDB-lite"/>
    </source>
</evidence>
<evidence type="ECO:0000303" key="4">
    <source>
    </source>
</evidence>
<evidence type="ECO:0000305" key="5"/>
<evidence type="ECO:0000312" key="6">
    <source>
        <dbReference type="MGI" id="MGI:1917794"/>
    </source>
</evidence>